<reference key="1">
    <citation type="journal article" date="2001" name="Gene">
        <title>Identification and cellular localization of human PFTAIRE1.</title>
        <authorList>
            <person name="Yang T."/>
            <person name="Chen J.-Y."/>
        </authorList>
    </citation>
    <scope>NUCLEOTIDE SEQUENCE [MRNA] (ISOFORM 1)</scope>
    <scope>SUBCELLULAR LOCATION</scope>
    <scope>TISSUE SPECIFICITY</scope>
    <source>
        <tissue>Cervix carcinoma</tissue>
    </source>
</reference>
<reference key="2">
    <citation type="journal article" date="1998" name="DNA Res.">
        <title>Prediction of the coding sequences of unidentified human genes. XII. The complete sequences of 100 new cDNA clones from brain which code for large proteins in vitro.</title>
        <authorList>
            <person name="Nagase T."/>
            <person name="Ishikawa K."/>
            <person name="Suyama M."/>
            <person name="Kikuno R."/>
            <person name="Hirosawa M."/>
            <person name="Miyajima N."/>
            <person name="Tanaka A."/>
            <person name="Kotani H."/>
            <person name="Nomura N."/>
            <person name="Ohara O."/>
        </authorList>
    </citation>
    <scope>NUCLEOTIDE SEQUENCE [LARGE SCALE MRNA] (ISOFORMS 1; 2 AND 3)</scope>
    <source>
        <tissue>Brain</tissue>
    </source>
</reference>
<reference key="3">
    <citation type="journal article" date="2004" name="Nat. Genet.">
        <title>Complete sequencing and characterization of 21,243 full-length human cDNAs.</title>
        <authorList>
            <person name="Ota T."/>
            <person name="Suzuki Y."/>
            <person name="Nishikawa T."/>
            <person name="Otsuki T."/>
            <person name="Sugiyama T."/>
            <person name="Irie R."/>
            <person name="Wakamatsu A."/>
            <person name="Hayashi K."/>
            <person name="Sato H."/>
            <person name="Nagai K."/>
            <person name="Kimura K."/>
            <person name="Makita H."/>
            <person name="Sekine M."/>
            <person name="Obayashi M."/>
            <person name="Nishi T."/>
            <person name="Shibahara T."/>
            <person name="Tanaka T."/>
            <person name="Ishii S."/>
            <person name="Yamamoto J."/>
            <person name="Saito K."/>
            <person name="Kawai Y."/>
            <person name="Isono Y."/>
            <person name="Nakamura Y."/>
            <person name="Nagahari K."/>
            <person name="Murakami K."/>
            <person name="Yasuda T."/>
            <person name="Iwayanagi T."/>
            <person name="Wagatsuma M."/>
            <person name="Shiratori A."/>
            <person name="Sudo H."/>
            <person name="Hosoiri T."/>
            <person name="Kaku Y."/>
            <person name="Kodaira H."/>
            <person name="Kondo H."/>
            <person name="Sugawara M."/>
            <person name="Takahashi M."/>
            <person name="Kanda K."/>
            <person name="Yokoi T."/>
            <person name="Furuya T."/>
            <person name="Kikkawa E."/>
            <person name="Omura Y."/>
            <person name="Abe K."/>
            <person name="Kamihara K."/>
            <person name="Katsuta N."/>
            <person name="Sato K."/>
            <person name="Tanikawa M."/>
            <person name="Yamazaki M."/>
            <person name="Ninomiya K."/>
            <person name="Ishibashi T."/>
            <person name="Yamashita H."/>
            <person name="Murakawa K."/>
            <person name="Fujimori K."/>
            <person name="Tanai H."/>
            <person name="Kimata M."/>
            <person name="Watanabe M."/>
            <person name="Hiraoka S."/>
            <person name="Chiba Y."/>
            <person name="Ishida S."/>
            <person name="Ono Y."/>
            <person name="Takiguchi S."/>
            <person name="Watanabe S."/>
            <person name="Yosida M."/>
            <person name="Hotuta T."/>
            <person name="Kusano J."/>
            <person name="Kanehori K."/>
            <person name="Takahashi-Fujii A."/>
            <person name="Hara H."/>
            <person name="Tanase T.-O."/>
            <person name="Nomura Y."/>
            <person name="Togiya S."/>
            <person name="Komai F."/>
            <person name="Hara R."/>
            <person name="Takeuchi K."/>
            <person name="Arita M."/>
            <person name="Imose N."/>
            <person name="Musashino K."/>
            <person name="Yuuki H."/>
            <person name="Oshima A."/>
            <person name="Sasaki N."/>
            <person name="Aotsuka S."/>
            <person name="Yoshikawa Y."/>
            <person name="Matsunawa H."/>
            <person name="Ichihara T."/>
            <person name="Shiohata N."/>
            <person name="Sano S."/>
            <person name="Moriya S."/>
            <person name="Momiyama H."/>
            <person name="Satoh N."/>
            <person name="Takami S."/>
            <person name="Terashima Y."/>
            <person name="Suzuki O."/>
            <person name="Nakagawa S."/>
            <person name="Senoh A."/>
            <person name="Mizoguchi H."/>
            <person name="Goto Y."/>
            <person name="Shimizu F."/>
            <person name="Wakebe H."/>
            <person name="Hishigaki H."/>
            <person name="Watanabe T."/>
            <person name="Sugiyama A."/>
            <person name="Takemoto M."/>
            <person name="Kawakami B."/>
            <person name="Yamazaki M."/>
            <person name="Watanabe K."/>
            <person name="Kumagai A."/>
            <person name="Itakura S."/>
            <person name="Fukuzumi Y."/>
            <person name="Fujimori Y."/>
            <person name="Komiyama M."/>
            <person name="Tashiro H."/>
            <person name="Tanigami A."/>
            <person name="Fujiwara T."/>
            <person name="Ono T."/>
            <person name="Yamada K."/>
            <person name="Fujii Y."/>
            <person name="Ozaki K."/>
            <person name="Hirao M."/>
            <person name="Ohmori Y."/>
            <person name="Kawabata A."/>
            <person name="Hikiji T."/>
            <person name="Kobatake N."/>
            <person name="Inagaki H."/>
            <person name="Ikema Y."/>
            <person name="Okamoto S."/>
            <person name="Okitani R."/>
            <person name="Kawakami T."/>
            <person name="Noguchi S."/>
            <person name="Itoh T."/>
            <person name="Shigeta K."/>
            <person name="Senba T."/>
            <person name="Matsumura K."/>
            <person name="Nakajima Y."/>
            <person name="Mizuno T."/>
            <person name="Morinaga M."/>
            <person name="Sasaki M."/>
            <person name="Togashi T."/>
            <person name="Oyama M."/>
            <person name="Hata H."/>
            <person name="Watanabe M."/>
            <person name="Komatsu T."/>
            <person name="Mizushima-Sugano J."/>
            <person name="Satoh T."/>
            <person name="Shirai Y."/>
            <person name="Takahashi Y."/>
            <person name="Nakagawa K."/>
            <person name="Okumura K."/>
            <person name="Nagase T."/>
            <person name="Nomura N."/>
            <person name="Kikuchi H."/>
            <person name="Masuho Y."/>
            <person name="Yamashita R."/>
            <person name="Nakai K."/>
            <person name="Yada T."/>
            <person name="Nakamura Y."/>
            <person name="Ohara O."/>
            <person name="Isogai T."/>
            <person name="Sugano S."/>
        </authorList>
    </citation>
    <scope>NUCLEOTIDE SEQUENCE [LARGE SCALE MRNA] (ISOFORM 1)</scope>
    <source>
        <tissue>Brain</tissue>
    </source>
</reference>
<reference key="4">
    <citation type="journal article" date="2003" name="Nature">
        <title>The DNA sequence of human chromosome 7.</title>
        <authorList>
            <person name="Hillier L.W."/>
            <person name="Fulton R.S."/>
            <person name="Fulton L.A."/>
            <person name="Graves T.A."/>
            <person name="Pepin K.H."/>
            <person name="Wagner-McPherson C."/>
            <person name="Layman D."/>
            <person name="Maas J."/>
            <person name="Jaeger S."/>
            <person name="Walker R."/>
            <person name="Wylie K."/>
            <person name="Sekhon M."/>
            <person name="Becker M.C."/>
            <person name="O'Laughlin M.D."/>
            <person name="Schaller M.E."/>
            <person name="Fewell G.A."/>
            <person name="Delehaunty K.D."/>
            <person name="Miner T.L."/>
            <person name="Nash W.E."/>
            <person name="Cordes M."/>
            <person name="Du H."/>
            <person name="Sun H."/>
            <person name="Edwards J."/>
            <person name="Bradshaw-Cordum H."/>
            <person name="Ali J."/>
            <person name="Andrews S."/>
            <person name="Isak A."/>
            <person name="Vanbrunt A."/>
            <person name="Nguyen C."/>
            <person name="Du F."/>
            <person name="Lamar B."/>
            <person name="Courtney L."/>
            <person name="Kalicki J."/>
            <person name="Ozersky P."/>
            <person name="Bielicki L."/>
            <person name="Scott K."/>
            <person name="Holmes A."/>
            <person name="Harkins R."/>
            <person name="Harris A."/>
            <person name="Strong C.M."/>
            <person name="Hou S."/>
            <person name="Tomlinson C."/>
            <person name="Dauphin-Kohlberg S."/>
            <person name="Kozlowicz-Reilly A."/>
            <person name="Leonard S."/>
            <person name="Rohlfing T."/>
            <person name="Rock S.M."/>
            <person name="Tin-Wollam A.-M."/>
            <person name="Abbott A."/>
            <person name="Minx P."/>
            <person name="Maupin R."/>
            <person name="Strowmatt C."/>
            <person name="Latreille P."/>
            <person name="Miller N."/>
            <person name="Johnson D."/>
            <person name="Murray J."/>
            <person name="Woessner J.P."/>
            <person name="Wendl M.C."/>
            <person name="Yang S.-P."/>
            <person name="Schultz B.R."/>
            <person name="Wallis J.W."/>
            <person name="Spieth J."/>
            <person name="Bieri T.A."/>
            <person name="Nelson J.O."/>
            <person name="Berkowicz N."/>
            <person name="Wohldmann P.E."/>
            <person name="Cook L.L."/>
            <person name="Hickenbotham M.T."/>
            <person name="Eldred J."/>
            <person name="Williams D."/>
            <person name="Bedell J.A."/>
            <person name="Mardis E.R."/>
            <person name="Clifton S.W."/>
            <person name="Chissoe S.L."/>
            <person name="Marra M.A."/>
            <person name="Raymond C."/>
            <person name="Haugen E."/>
            <person name="Gillett W."/>
            <person name="Zhou Y."/>
            <person name="James R."/>
            <person name="Phelps K."/>
            <person name="Iadanoto S."/>
            <person name="Bubb K."/>
            <person name="Simms E."/>
            <person name="Levy R."/>
            <person name="Clendenning J."/>
            <person name="Kaul R."/>
            <person name="Kent W.J."/>
            <person name="Furey T.S."/>
            <person name="Baertsch R.A."/>
            <person name="Brent M.R."/>
            <person name="Keibler E."/>
            <person name="Flicek P."/>
            <person name="Bork P."/>
            <person name="Suyama M."/>
            <person name="Bailey J.A."/>
            <person name="Portnoy M.E."/>
            <person name="Torrents D."/>
            <person name="Chinwalla A.T."/>
            <person name="Gish W.R."/>
            <person name="Eddy S.R."/>
            <person name="McPherson J.D."/>
            <person name="Olson M.V."/>
            <person name="Eichler E.E."/>
            <person name="Green E.D."/>
            <person name="Waterston R.H."/>
            <person name="Wilson R.K."/>
        </authorList>
    </citation>
    <scope>NUCLEOTIDE SEQUENCE [LARGE SCALE GENOMIC DNA]</scope>
</reference>
<reference key="5">
    <citation type="journal article" date="2003" name="Science">
        <title>Human chromosome 7: DNA sequence and biology.</title>
        <authorList>
            <person name="Scherer S.W."/>
            <person name="Cheung J."/>
            <person name="MacDonald J.R."/>
            <person name="Osborne L.R."/>
            <person name="Nakabayashi K."/>
            <person name="Herbrick J.-A."/>
            <person name="Carson A.R."/>
            <person name="Parker-Katiraee L."/>
            <person name="Skaug J."/>
            <person name="Khaja R."/>
            <person name="Zhang J."/>
            <person name="Hudek A.K."/>
            <person name="Li M."/>
            <person name="Haddad M."/>
            <person name="Duggan G.E."/>
            <person name="Fernandez B.A."/>
            <person name="Kanematsu E."/>
            <person name="Gentles S."/>
            <person name="Christopoulos C.C."/>
            <person name="Choufani S."/>
            <person name="Kwasnicka D."/>
            <person name="Zheng X.H."/>
            <person name="Lai Z."/>
            <person name="Nusskern D.R."/>
            <person name="Zhang Q."/>
            <person name="Gu Z."/>
            <person name="Lu F."/>
            <person name="Zeesman S."/>
            <person name="Nowaczyk M.J."/>
            <person name="Teshima I."/>
            <person name="Chitayat D."/>
            <person name="Shuman C."/>
            <person name="Weksberg R."/>
            <person name="Zackai E.H."/>
            <person name="Grebe T.A."/>
            <person name="Cox S.R."/>
            <person name="Kirkpatrick S.J."/>
            <person name="Rahman N."/>
            <person name="Friedman J.M."/>
            <person name="Heng H.H.Q."/>
            <person name="Pelicci P.G."/>
            <person name="Lo-Coco F."/>
            <person name="Belloni E."/>
            <person name="Shaffer L.G."/>
            <person name="Pober B."/>
            <person name="Morton C.C."/>
            <person name="Gusella J.F."/>
            <person name="Bruns G.A.P."/>
            <person name="Korf B.R."/>
            <person name="Quade B.J."/>
            <person name="Ligon A.H."/>
            <person name="Ferguson H."/>
            <person name="Higgins A.W."/>
            <person name="Leach N.T."/>
            <person name="Herrick S.R."/>
            <person name="Lemyre E."/>
            <person name="Farra C.G."/>
            <person name="Kim H.-G."/>
            <person name="Summers A.M."/>
            <person name="Gripp K.W."/>
            <person name="Roberts W."/>
            <person name="Szatmari P."/>
            <person name="Winsor E.J.T."/>
            <person name="Grzeschik K.-H."/>
            <person name="Teebi A."/>
            <person name="Minassian B.A."/>
            <person name="Kere J."/>
            <person name="Armengol L."/>
            <person name="Pujana M.A."/>
            <person name="Estivill X."/>
            <person name="Wilson M.D."/>
            <person name="Koop B.F."/>
            <person name="Tosi S."/>
            <person name="Moore G.E."/>
            <person name="Boright A.P."/>
            <person name="Zlotorynski E."/>
            <person name="Kerem B."/>
            <person name="Kroisel P.M."/>
            <person name="Petek E."/>
            <person name="Oscier D.G."/>
            <person name="Mould S.J."/>
            <person name="Doehner H."/>
            <person name="Doehner K."/>
            <person name="Rommens J.M."/>
            <person name="Vincent J.B."/>
            <person name="Venter J.C."/>
            <person name="Li P.W."/>
            <person name="Mural R.J."/>
            <person name="Adams M.D."/>
            <person name="Tsui L.-C."/>
        </authorList>
    </citation>
    <scope>NUCLEOTIDE SEQUENCE [LARGE SCALE GENOMIC DNA]</scope>
</reference>
<reference key="6">
    <citation type="submission" date="2005-09" db="EMBL/GenBank/DDBJ databases">
        <authorList>
            <person name="Mural R.J."/>
            <person name="Istrail S."/>
            <person name="Sutton G.G."/>
            <person name="Florea L."/>
            <person name="Halpern A.L."/>
            <person name="Mobarry C.M."/>
            <person name="Lippert R."/>
            <person name="Walenz B."/>
            <person name="Shatkay H."/>
            <person name="Dew I."/>
            <person name="Miller J.R."/>
            <person name="Flanigan M.J."/>
            <person name="Edwards N.J."/>
            <person name="Bolanos R."/>
            <person name="Fasulo D."/>
            <person name="Halldorsson B.V."/>
            <person name="Hannenhalli S."/>
            <person name="Turner R."/>
            <person name="Yooseph S."/>
            <person name="Lu F."/>
            <person name="Nusskern D.R."/>
            <person name="Shue B.C."/>
            <person name="Zheng X.H."/>
            <person name="Zhong F."/>
            <person name="Delcher A.L."/>
            <person name="Huson D.H."/>
            <person name="Kravitz S.A."/>
            <person name="Mouchard L."/>
            <person name="Reinert K."/>
            <person name="Remington K.A."/>
            <person name="Clark A.G."/>
            <person name="Waterman M.S."/>
            <person name="Eichler E.E."/>
            <person name="Adams M.D."/>
            <person name="Hunkapiller M.W."/>
            <person name="Myers E.W."/>
            <person name="Venter J.C."/>
        </authorList>
    </citation>
    <scope>NUCLEOTIDE SEQUENCE [LARGE SCALE GENOMIC DNA]</scope>
</reference>
<reference key="7">
    <citation type="journal article" date="2004" name="Genome Res.">
        <title>The status, quality, and expansion of the NIH full-length cDNA project: the Mammalian Gene Collection (MGC).</title>
        <authorList>
            <consortium name="The MGC Project Team"/>
        </authorList>
    </citation>
    <scope>NUCLEOTIDE SEQUENCE [LARGE SCALE MRNA] (ISOFORM 2)</scope>
    <source>
        <tissue>Brain</tissue>
        <tissue>Testis</tissue>
    </source>
</reference>
<reference key="8">
    <citation type="journal article" date="2002" name="Sheng Wu Hua Xue Yu Sheng Wu Wu Li Xue Bao">
        <title>KIAA0202, a human septin family member, interacting with hPFTAIRE1.</title>
        <authorList>
            <person name="Yang T."/>
            <person name="Gao Y.K."/>
            <person name="Chen J.Y."/>
        </authorList>
    </citation>
    <scope>INTERACTION WITH SEPT8</scope>
</reference>
<reference key="9">
    <citation type="journal article" date="2006" name="Cell Res.">
        <title>A Cdc2-related protein kinase hPFTAIRE1 from human brain interacting with 14-3-3 proteins.</title>
        <authorList>
            <person name="Gao Y."/>
            <person name="Jiang M."/>
            <person name="Yang T."/>
            <person name="Ni J."/>
            <person name="Chen J."/>
        </authorList>
    </citation>
    <scope>INTERACTION WITH YWHAB; YWHAE; YWHAH AND YWHAQ</scope>
</reference>
<reference key="10">
    <citation type="journal article" date="2006" name="Proc. Natl. Acad. Sci. U.S.A.">
        <title>An RNA interference-based screen identifies MAP4K4/NIK as a negative regulator of PPARgamma, adipogenesis, and insulin-responsive hexose transport.</title>
        <authorList>
            <person name="Tang X."/>
            <person name="Guilherme A."/>
            <person name="Chakladar A."/>
            <person name="Powelka A.M."/>
            <person name="Konda S."/>
            <person name="Virbasius J.V."/>
            <person name="Nicoloro S.M."/>
            <person name="Straubhaar J."/>
            <person name="Czech M.P."/>
        </authorList>
    </citation>
    <scope>FUNCTION</scope>
</reference>
<reference key="11">
    <citation type="journal article" date="2007" name="Proc. Natl. Acad. Sci. U.S.A.">
        <title>Functional characterization of human PFTK1 as a cyclin-dependent kinase.</title>
        <authorList>
            <person name="Shu F."/>
            <person name="Lv S."/>
            <person name="Qin Y."/>
            <person name="Ma X."/>
            <person name="Wang X."/>
            <person name="Peng X."/>
            <person name="Luo Y."/>
            <person name="Xu B.E."/>
            <person name="Sun X."/>
            <person name="Wu J."/>
        </authorList>
    </citation>
    <scope>FUNCTION</scope>
    <scope>INTERACTION WITH CCDN3 AND CDKN1A</scope>
    <scope>MUTAGENESIS OF LYS-164</scope>
</reference>
<reference key="12">
    <citation type="journal article" date="2008" name="Mol. Cell">
        <title>Kinase-selective enrichment enables quantitative phosphoproteomics of the kinome across the cell cycle.</title>
        <authorList>
            <person name="Daub H."/>
            <person name="Olsen J.V."/>
            <person name="Bairlein M."/>
            <person name="Gnad F."/>
            <person name="Oppermann F.S."/>
            <person name="Korner R."/>
            <person name="Greff Z."/>
            <person name="Keri G."/>
            <person name="Stemmann O."/>
            <person name="Mann M."/>
        </authorList>
    </citation>
    <scope>PHOSPHORYLATION [LARGE SCALE ANALYSIS] AT SER-95</scope>
    <scope>IDENTIFICATION BY MASS SPECTROMETRY [LARGE SCALE ANALYSIS]</scope>
    <source>
        <tissue>Cervix carcinoma</tissue>
    </source>
</reference>
<reference key="13">
    <citation type="journal article" date="2009" name="Dev. Cell">
        <title>Cell cycle control of wnt receptor activation.</title>
        <authorList>
            <person name="Davidson G."/>
            <person name="Shen J."/>
            <person name="Huang Y.L."/>
            <person name="Su Y."/>
            <person name="Karaulanov E."/>
            <person name="Bartscherer K."/>
            <person name="Hassler C."/>
            <person name="Stannek P."/>
            <person name="Boutros M."/>
            <person name="Niehrs C."/>
        </authorList>
    </citation>
    <scope>FUNCTION</scope>
    <scope>SUBCELLULAR LOCATION</scope>
    <scope>INTERACTION WITH CCNY</scope>
</reference>
<reference key="14">
    <citation type="journal article" date="2009" name="FEBS Lett.">
        <title>Cyclin Y, a novel membrane-associated cyclin, interacts with PFTK1.</title>
        <authorList>
            <person name="Jiang M."/>
            <person name="Gao Y."/>
            <person name="Yang T."/>
            <person name="Zhu X."/>
            <person name="Chen J."/>
        </authorList>
    </citation>
    <scope>FUNCTION</scope>
    <scope>INTERACTION WITH CCNY</scope>
    <scope>SUBCELLULAR LOCATION</scope>
    <scope>MUTAGENESIS OF LYS-164</scope>
</reference>
<reference key="15">
    <citation type="journal article" date="2009" name="Mol. Cell. Proteomics">
        <title>Large-scale proteomics analysis of the human kinome.</title>
        <authorList>
            <person name="Oppermann F.S."/>
            <person name="Gnad F."/>
            <person name="Olsen J.V."/>
            <person name="Hornberger R."/>
            <person name="Greff Z."/>
            <person name="Keri G."/>
            <person name="Mann M."/>
            <person name="Daub H."/>
        </authorList>
    </citation>
    <scope>PHOSPHORYLATION [LARGE SCALE ANALYSIS] AT SER-95</scope>
    <scope>IDENTIFICATION BY MASS SPECTROMETRY [LARGE SCALE ANALYSIS]</scope>
</reference>
<reference key="16">
    <citation type="journal article" date="2013" name="J. Proteome Res.">
        <title>Toward a comprehensive characterization of a human cancer cell phosphoproteome.</title>
        <authorList>
            <person name="Zhou H."/>
            <person name="Di Palma S."/>
            <person name="Preisinger C."/>
            <person name="Peng M."/>
            <person name="Polat A.N."/>
            <person name="Heck A.J."/>
            <person name="Mohammed S."/>
        </authorList>
    </citation>
    <scope>PHOSPHORYLATION [LARGE SCALE ANALYSIS] AT SER-24; SER-78 AND SER-134</scope>
    <scope>IDENTIFICATION BY MASS SPECTROMETRY [LARGE SCALE ANALYSIS]</scope>
    <source>
        <tissue>Cervix carcinoma</tissue>
    </source>
</reference>
<reference key="17">
    <citation type="journal article" date="2014" name="J. Proteomics">
        <title>An enzyme assisted RP-RPLC approach for in-depth analysis of human liver phosphoproteome.</title>
        <authorList>
            <person name="Bian Y."/>
            <person name="Song C."/>
            <person name="Cheng K."/>
            <person name="Dong M."/>
            <person name="Wang F."/>
            <person name="Huang J."/>
            <person name="Sun D."/>
            <person name="Wang L."/>
            <person name="Ye M."/>
            <person name="Zou H."/>
        </authorList>
    </citation>
    <scope>IDENTIFICATION BY MASS SPECTROMETRY [LARGE SCALE ANALYSIS]</scope>
    <source>
        <tissue>Liver</tissue>
    </source>
</reference>
<reference key="18">
    <citation type="journal article" date="2016" name="J. Biol. Chem.">
        <title>Caprin-2 positively regulates CDK14/Cyclin Y-mediated LRP5/6 constitutive phosphorylation.</title>
        <authorList>
            <person name="Wang X."/>
            <person name="Jia Y."/>
            <person name="Fei C."/>
            <person name="Song X."/>
            <person name="Li L."/>
        </authorList>
    </citation>
    <scope>IDENTIFICATION IN A COMPLEX WITH CAPRIN2; LRP6 AND CCNY</scope>
</reference>
<reference key="19">
    <citation type="journal article" date="2007" name="Nature">
        <title>Patterns of somatic mutation in human cancer genomes.</title>
        <authorList>
            <person name="Greenman C."/>
            <person name="Stephens P."/>
            <person name="Smith R."/>
            <person name="Dalgliesh G.L."/>
            <person name="Hunter C."/>
            <person name="Bignell G."/>
            <person name="Davies H."/>
            <person name="Teague J."/>
            <person name="Butler A."/>
            <person name="Stevens C."/>
            <person name="Edkins S."/>
            <person name="O'Meara S."/>
            <person name="Vastrik I."/>
            <person name="Schmidt E.E."/>
            <person name="Avis T."/>
            <person name="Barthorpe S."/>
            <person name="Bhamra G."/>
            <person name="Buck G."/>
            <person name="Choudhury B."/>
            <person name="Clements J."/>
            <person name="Cole J."/>
            <person name="Dicks E."/>
            <person name="Forbes S."/>
            <person name="Gray K."/>
            <person name="Halliday K."/>
            <person name="Harrison R."/>
            <person name="Hills K."/>
            <person name="Hinton J."/>
            <person name="Jenkinson A."/>
            <person name="Jones D."/>
            <person name="Menzies A."/>
            <person name="Mironenko T."/>
            <person name="Perry J."/>
            <person name="Raine K."/>
            <person name="Richardson D."/>
            <person name="Shepherd R."/>
            <person name="Small A."/>
            <person name="Tofts C."/>
            <person name="Varian J."/>
            <person name="Webb T."/>
            <person name="West S."/>
            <person name="Widaa S."/>
            <person name="Yates A."/>
            <person name="Cahill D.P."/>
            <person name="Louis D.N."/>
            <person name="Goldstraw P."/>
            <person name="Nicholson A.G."/>
            <person name="Brasseur F."/>
            <person name="Looijenga L."/>
            <person name="Weber B.L."/>
            <person name="Chiew Y.-E."/>
            <person name="DeFazio A."/>
            <person name="Greaves M.F."/>
            <person name="Green A.R."/>
            <person name="Campbell P."/>
            <person name="Birney E."/>
            <person name="Easton D.F."/>
            <person name="Chenevix-Trench G."/>
            <person name="Tan M.-H."/>
            <person name="Khoo S.K."/>
            <person name="Teh B.T."/>
            <person name="Yuen S.T."/>
            <person name="Leung S.Y."/>
            <person name="Wooster R."/>
            <person name="Futreal P.A."/>
            <person name="Stratton M.R."/>
        </authorList>
    </citation>
    <scope>VARIANTS [LARGE SCALE ANALYSIS] ILE-432 AND ARG-463</scope>
</reference>
<dbReference type="EC" id="2.7.11.22"/>
<dbReference type="EMBL" id="AF119833">
    <property type="protein sequence ID" value="AAG43234.1"/>
    <property type="molecule type" value="mRNA"/>
</dbReference>
<dbReference type="EMBL" id="AB020641">
    <property type="protein sequence ID" value="BAA74857.2"/>
    <property type="status" value="ALT_INIT"/>
    <property type="molecule type" value="mRNA"/>
</dbReference>
<dbReference type="EMBL" id="AK289782">
    <property type="protein sequence ID" value="BAF82471.1"/>
    <property type="molecule type" value="mRNA"/>
</dbReference>
<dbReference type="EMBL" id="AK295086">
    <property type="protein sequence ID" value="BAG58127.1"/>
    <property type="molecule type" value="mRNA"/>
</dbReference>
<dbReference type="EMBL" id="AK297974">
    <property type="protein sequence ID" value="BAG60284.1"/>
    <property type="molecule type" value="mRNA"/>
</dbReference>
<dbReference type="EMBL" id="AK316026">
    <property type="protein sequence ID" value="BAH14397.1"/>
    <property type="molecule type" value="mRNA"/>
</dbReference>
<dbReference type="EMBL" id="AC000057">
    <property type="protein sequence ID" value="AAS07411.1"/>
    <property type="molecule type" value="Genomic_DNA"/>
</dbReference>
<dbReference type="EMBL" id="AC000059">
    <property type="status" value="NOT_ANNOTATED_CDS"/>
    <property type="molecule type" value="Genomic_DNA"/>
</dbReference>
<dbReference type="EMBL" id="AC002065">
    <property type="protein sequence ID" value="AAM48566.1"/>
    <property type="molecule type" value="Genomic_DNA"/>
</dbReference>
<dbReference type="EMBL" id="AC002456">
    <property type="status" value="NOT_ANNOTATED_CDS"/>
    <property type="molecule type" value="Genomic_DNA"/>
</dbReference>
<dbReference type="EMBL" id="AC002458">
    <property type="protein sequence ID" value="AAS07412.1"/>
    <property type="molecule type" value="Genomic_DNA"/>
</dbReference>
<dbReference type="EMBL" id="AC006036">
    <property type="protein sequence ID" value="AAF19245.1"/>
    <property type="molecule type" value="Genomic_DNA"/>
</dbReference>
<dbReference type="EMBL" id="CH236949">
    <property type="protein sequence ID" value="EAL24162.1"/>
    <property type="molecule type" value="Genomic_DNA"/>
</dbReference>
<dbReference type="EMBL" id="CH471091">
    <property type="protein sequence ID" value="EAW76873.1"/>
    <property type="molecule type" value="Genomic_DNA"/>
</dbReference>
<dbReference type="EMBL" id="CH471091">
    <property type="protein sequence ID" value="EAW76874.1"/>
    <property type="molecule type" value="Genomic_DNA"/>
</dbReference>
<dbReference type="EMBL" id="BC136476">
    <property type="protein sequence ID" value="AAI36477.1"/>
    <property type="molecule type" value="mRNA"/>
</dbReference>
<dbReference type="EMBL" id="BC136477">
    <property type="protein sequence ID" value="AAI36478.1"/>
    <property type="molecule type" value="mRNA"/>
</dbReference>
<dbReference type="EMBL" id="BC152388">
    <property type="protein sequence ID" value="AAI52389.1"/>
    <property type="molecule type" value="mRNA"/>
</dbReference>
<dbReference type="EMBL" id="BC152436">
    <property type="protein sequence ID" value="AAI52437.1"/>
    <property type="molecule type" value="mRNA"/>
</dbReference>
<dbReference type="EMBL" id="BC167152">
    <property type="protein sequence ID" value="AAI67152.1"/>
    <property type="molecule type" value="mRNA"/>
</dbReference>
<dbReference type="EMBL" id="BC167156">
    <property type="protein sequence ID" value="AAI67156.1"/>
    <property type="molecule type" value="mRNA"/>
</dbReference>
<dbReference type="CCDS" id="CCDS5619.1">
    <molecule id="O94921-2"/>
</dbReference>
<dbReference type="CCDS" id="CCDS75626.1">
    <molecule id="O94921-1"/>
</dbReference>
<dbReference type="CCDS" id="CCDS75627.1">
    <molecule id="O94921-3"/>
</dbReference>
<dbReference type="RefSeq" id="NP_001274064.1">
    <molecule id="O94921-1"/>
    <property type="nucleotide sequence ID" value="NM_001287135.2"/>
</dbReference>
<dbReference type="RefSeq" id="NP_001274065.1">
    <molecule id="O94921-3"/>
    <property type="nucleotide sequence ID" value="NM_001287136.1"/>
</dbReference>
<dbReference type="RefSeq" id="NP_001274066.1">
    <property type="nucleotide sequence ID" value="NM_001287137.1"/>
</dbReference>
<dbReference type="RefSeq" id="NP_036527.1">
    <molecule id="O94921-2"/>
    <property type="nucleotide sequence ID" value="NM_012395.3"/>
</dbReference>
<dbReference type="RefSeq" id="XP_005250495.1">
    <property type="nucleotide sequence ID" value="XM_005250438.3"/>
</dbReference>
<dbReference type="RefSeq" id="XP_005250496.1">
    <property type="nucleotide sequence ID" value="XM_005250439.2"/>
</dbReference>
<dbReference type="RefSeq" id="XP_011514608.1">
    <property type="nucleotide sequence ID" value="XM_011516306.2"/>
</dbReference>
<dbReference type="RefSeq" id="XP_016867809.1">
    <property type="nucleotide sequence ID" value="XM_017012320.1"/>
</dbReference>
<dbReference type="RefSeq" id="XP_016867810.1">
    <property type="nucleotide sequence ID" value="XM_017012321.1"/>
</dbReference>
<dbReference type="RefSeq" id="XP_016867811.1">
    <property type="nucleotide sequence ID" value="XM_017012322.1"/>
</dbReference>
<dbReference type="SMR" id="O94921"/>
<dbReference type="BioGRID" id="111239">
    <property type="interactions" value="46"/>
</dbReference>
<dbReference type="ComplexPortal" id="CPX-364">
    <property type="entry name" value="Cyclin Y-CDK14 complex"/>
</dbReference>
<dbReference type="DIP" id="DIP-39618N"/>
<dbReference type="FunCoup" id="O94921">
    <property type="interactions" value="2602"/>
</dbReference>
<dbReference type="IntAct" id="O94921">
    <property type="interactions" value="27"/>
</dbReference>
<dbReference type="MINT" id="O94921"/>
<dbReference type="STRING" id="9606.ENSP00000369390"/>
<dbReference type="BindingDB" id="O94921"/>
<dbReference type="ChEMBL" id="CHEMBL6162"/>
<dbReference type="DrugCentral" id="O94921"/>
<dbReference type="iPTMnet" id="O94921"/>
<dbReference type="PhosphoSitePlus" id="O94921"/>
<dbReference type="SwissPalm" id="O94921"/>
<dbReference type="BioMuta" id="CDK14"/>
<dbReference type="CPTAC" id="non-CPTAC-3108"/>
<dbReference type="CPTAC" id="non-CPTAC-3109"/>
<dbReference type="jPOST" id="O94921"/>
<dbReference type="MassIVE" id="O94921"/>
<dbReference type="PaxDb" id="9606-ENSP00000369390"/>
<dbReference type="PeptideAtlas" id="O94921"/>
<dbReference type="ProteomicsDB" id="50556">
    <molecule id="O94921-1"/>
</dbReference>
<dbReference type="ProteomicsDB" id="50557">
    <molecule id="O94921-2"/>
</dbReference>
<dbReference type="ProteomicsDB" id="50558">
    <molecule id="O94921-3"/>
</dbReference>
<dbReference type="Pumba" id="O94921"/>
<dbReference type="Antibodypedia" id="15462">
    <property type="antibodies" value="236 antibodies from 28 providers"/>
</dbReference>
<dbReference type="DNASU" id="5218"/>
<dbReference type="Ensembl" id="ENST00000265741.7">
    <molecule id="O94921-2"/>
    <property type="protein sequence ID" value="ENSP00000265741.3"/>
    <property type="gene ID" value="ENSG00000058091.17"/>
</dbReference>
<dbReference type="Ensembl" id="ENST00000380050.8">
    <molecule id="O94921-1"/>
    <property type="protein sequence ID" value="ENSP00000369390.3"/>
    <property type="gene ID" value="ENSG00000058091.17"/>
</dbReference>
<dbReference type="Ensembl" id="ENST00000406263.5">
    <molecule id="O94921-3"/>
    <property type="protein sequence ID" value="ENSP00000385034.1"/>
    <property type="gene ID" value="ENSG00000058091.17"/>
</dbReference>
<dbReference type="GeneID" id="5218"/>
<dbReference type="KEGG" id="hsa:5218"/>
<dbReference type="MANE-Select" id="ENST00000380050.8">
    <property type="protein sequence ID" value="ENSP00000369390.3"/>
    <property type="RefSeq nucleotide sequence ID" value="NM_001287135.2"/>
    <property type="RefSeq protein sequence ID" value="NP_001274064.1"/>
</dbReference>
<dbReference type="UCSC" id="uc003uky.4">
    <molecule id="O94921-1"/>
    <property type="organism name" value="human"/>
</dbReference>
<dbReference type="AGR" id="HGNC:8883"/>
<dbReference type="CTD" id="5218"/>
<dbReference type="DisGeNET" id="5218"/>
<dbReference type="GeneCards" id="CDK14"/>
<dbReference type="HGNC" id="HGNC:8883">
    <property type="gene designation" value="CDK14"/>
</dbReference>
<dbReference type="HPA" id="ENSG00000058091">
    <property type="expression patterns" value="Low tissue specificity"/>
</dbReference>
<dbReference type="MIM" id="610679">
    <property type="type" value="gene"/>
</dbReference>
<dbReference type="neXtProt" id="NX_O94921"/>
<dbReference type="OpenTargets" id="ENSG00000058091"/>
<dbReference type="PharmGKB" id="PA33221"/>
<dbReference type="VEuPathDB" id="HostDB:ENSG00000058091"/>
<dbReference type="eggNOG" id="KOG0594">
    <property type="taxonomic scope" value="Eukaryota"/>
</dbReference>
<dbReference type="GeneTree" id="ENSGT00940000157640"/>
<dbReference type="InParanoid" id="O94921"/>
<dbReference type="OMA" id="MCDLLDS"/>
<dbReference type="OrthoDB" id="1732493at2759"/>
<dbReference type="PAN-GO" id="O94921">
    <property type="GO annotations" value="7 GO annotations based on evolutionary models"/>
</dbReference>
<dbReference type="PhylomeDB" id="O94921"/>
<dbReference type="TreeFam" id="TF106508"/>
<dbReference type="PathwayCommons" id="O94921"/>
<dbReference type="SignaLink" id="O94921"/>
<dbReference type="SIGNOR" id="O94921"/>
<dbReference type="BioGRID-ORCS" id="5218">
    <property type="hits" value="8 hits in 1179 CRISPR screens"/>
</dbReference>
<dbReference type="ChiTaRS" id="CDK14">
    <property type="organism name" value="human"/>
</dbReference>
<dbReference type="GeneWiki" id="PFTK1"/>
<dbReference type="GenomeRNAi" id="5218"/>
<dbReference type="Pharos" id="O94921">
    <property type="development level" value="Tchem"/>
</dbReference>
<dbReference type="PRO" id="PR:O94921"/>
<dbReference type="Proteomes" id="UP000005640">
    <property type="component" value="Chromosome 7"/>
</dbReference>
<dbReference type="RNAct" id="O94921">
    <property type="molecule type" value="protein"/>
</dbReference>
<dbReference type="Bgee" id="ENSG00000058091">
    <property type="expression patterns" value="Expressed in postcentral gyrus and 193 other cell types or tissues"/>
</dbReference>
<dbReference type="ExpressionAtlas" id="O94921">
    <property type="expression patterns" value="baseline and differential"/>
</dbReference>
<dbReference type="GO" id="GO:0000307">
    <property type="term" value="C:cyclin-dependent protein kinase holoenzyme complex"/>
    <property type="evidence" value="ECO:0000353"/>
    <property type="project" value="ComplexPortal"/>
</dbReference>
<dbReference type="GO" id="GO:0005737">
    <property type="term" value="C:cytoplasm"/>
    <property type="evidence" value="ECO:0000318"/>
    <property type="project" value="GO_Central"/>
</dbReference>
<dbReference type="GO" id="GO:0000308">
    <property type="term" value="C:cytoplasmic cyclin-dependent protein kinase holoenzyme complex"/>
    <property type="evidence" value="ECO:0000314"/>
    <property type="project" value="UniProtKB"/>
</dbReference>
<dbReference type="GO" id="GO:0005829">
    <property type="term" value="C:cytosol"/>
    <property type="evidence" value="ECO:0000314"/>
    <property type="project" value="HPA"/>
</dbReference>
<dbReference type="GO" id="GO:0005654">
    <property type="term" value="C:nucleoplasm"/>
    <property type="evidence" value="ECO:0000314"/>
    <property type="project" value="HPA"/>
</dbReference>
<dbReference type="GO" id="GO:0005634">
    <property type="term" value="C:nucleus"/>
    <property type="evidence" value="ECO:0000318"/>
    <property type="project" value="GO_Central"/>
</dbReference>
<dbReference type="GO" id="GO:0005886">
    <property type="term" value="C:plasma membrane"/>
    <property type="evidence" value="ECO:0000314"/>
    <property type="project" value="UniProtKB"/>
</dbReference>
<dbReference type="GO" id="GO:0005524">
    <property type="term" value="F:ATP binding"/>
    <property type="evidence" value="ECO:0007669"/>
    <property type="project" value="UniProtKB-KW"/>
</dbReference>
<dbReference type="GO" id="GO:0030332">
    <property type="term" value="F:cyclin binding"/>
    <property type="evidence" value="ECO:0000353"/>
    <property type="project" value="UniProtKB"/>
</dbReference>
<dbReference type="GO" id="GO:0004693">
    <property type="term" value="F:cyclin-dependent protein serine/threonine kinase activity"/>
    <property type="evidence" value="ECO:0000315"/>
    <property type="project" value="UniProtKB"/>
</dbReference>
<dbReference type="GO" id="GO:0106310">
    <property type="term" value="F:protein serine kinase activity"/>
    <property type="evidence" value="ECO:0007669"/>
    <property type="project" value="RHEA"/>
</dbReference>
<dbReference type="GO" id="GO:0051301">
    <property type="term" value="P:cell division"/>
    <property type="evidence" value="ECO:0007669"/>
    <property type="project" value="UniProtKB-KW"/>
</dbReference>
<dbReference type="GO" id="GO:0000086">
    <property type="term" value="P:G2/M transition of mitotic cell cycle"/>
    <property type="evidence" value="ECO:0000314"/>
    <property type="project" value="UniProtKB"/>
</dbReference>
<dbReference type="GO" id="GO:0060828">
    <property type="term" value="P:regulation of canonical Wnt signaling pathway"/>
    <property type="evidence" value="ECO:0000314"/>
    <property type="project" value="UniProtKB"/>
</dbReference>
<dbReference type="GO" id="GO:1901987">
    <property type="term" value="P:regulation of cell cycle phase transition"/>
    <property type="evidence" value="ECO:0000318"/>
    <property type="project" value="GO_Central"/>
</dbReference>
<dbReference type="GO" id="GO:0016055">
    <property type="term" value="P:Wnt signaling pathway"/>
    <property type="evidence" value="ECO:0007669"/>
    <property type="project" value="UniProtKB-KW"/>
</dbReference>
<dbReference type="CDD" id="cd07869">
    <property type="entry name" value="STKc_PFTAIRE1"/>
    <property type="match status" value="1"/>
</dbReference>
<dbReference type="FunFam" id="1.10.510.10:FF:000131">
    <property type="entry name" value="cyclin-dependent kinase 14 isoform X1"/>
    <property type="match status" value="1"/>
</dbReference>
<dbReference type="FunFam" id="3.30.200.20:FF:000007">
    <property type="entry name" value="Cyclin-dependent kinase 14, putative"/>
    <property type="match status" value="1"/>
</dbReference>
<dbReference type="Gene3D" id="3.30.200.20">
    <property type="entry name" value="Phosphorylase Kinase, domain 1"/>
    <property type="match status" value="1"/>
</dbReference>
<dbReference type="Gene3D" id="1.10.510.10">
    <property type="entry name" value="Transferase(Phosphotransferase) domain 1"/>
    <property type="match status" value="1"/>
</dbReference>
<dbReference type="InterPro" id="IPR050108">
    <property type="entry name" value="CDK"/>
</dbReference>
<dbReference type="InterPro" id="IPR011009">
    <property type="entry name" value="Kinase-like_dom_sf"/>
</dbReference>
<dbReference type="InterPro" id="IPR000719">
    <property type="entry name" value="Prot_kinase_dom"/>
</dbReference>
<dbReference type="InterPro" id="IPR017441">
    <property type="entry name" value="Protein_kinase_ATP_BS"/>
</dbReference>
<dbReference type="InterPro" id="IPR008271">
    <property type="entry name" value="Ser/Thr_kinase_AS"/>
</dbReference>
<dbReference type="PANTHER" id="PTHR24056">
    <property type="entry name" value="CELL DIVISION PROTEIN KINASE"/>
    <property type="match status" value="1"/>
</dbReference>
<dbReference type="PANTHER" id="PTHR24056:SF154">
    <property type="entry name" value="CYCLIN-DEPENDENT KINASE 14"/>
    <property type="match status" value="1"/>
</dbReference>
<dbReference type="Pfam" id="PF00069">
    <property type="entry name" value="Pkinase"/>
    <property type="match status" value="1"/>
</dbReference>
<dbReference type="SMART" id="SM00220">
    <property type="entry name" value="S_TKc"/>
    <property type="match status" value="1"/>
</dbReference>
<dbReference type="SUPFAM" id="SSF56112">
    <property type="entry name" value="Protein kinase-like (PK-like)"/>
    <property type="match status" value="1"/>
</dbReference>
<dbReference type="PROSITE" id="PS00107">
    <property type="entry name" value="PROTEIN_KINASE_ATP"/>
    <property type="match status" value="1"/>
</dbReference>
<dbReference type="PROSITE" id="PS50011">
    <property type="entry name" value="PROTEIN_KINASE_DOM"/>
    <property type="match status" value="1"/>
</dbReference>
<dbReference type="PROSITE" id="PS00108">
    <property type="entry name" value="PROTEIN_KINASE_ST"/>
    <property type="match status" value="1"/>
</dbReference>
<keyword id="KW-0025">Alternative splicing</keyword>
<keyword id="KW-0067">ATP-binding</keyword>
<keyword id="KW-0131">Cell cycle</keyword>
<keyword id="KW-0132">Cell division</keyword>
<keyword id="KW-1003">Cell membrane</keyword>
<keyword id="KW-0963">Cytoplasm</keyword>
<keyword id="KW-0418">Kinase</keyword>
<keyword id="KW-0472">Membrane</keyword>
<keyword id="KW-0547">Nucleotide-binding</keyword>
<keyword id="KW-0539">Nucleus</keyword>
<keyword id="KW-0597">Phosphoprotein</keyword>
<keyword id="KW-1267">Proteomics identification</keyword>
<keyword id="KW-1185">Reference proteome</keyword>
<keyword id="KW-0723">Serine/threonine-protein kinase</keyword>
<keyword id="KW-0808">Transferase</keyword>
<keyword id="KW-0879">Wnt signaling pathway</keyword>
<proteinExistence type="evidence at protein level"/>
<accession>O94921</accession>
<accession>A4D1E6</accession>
<accession>A6NK51</accession>
<accession>A8WFP6</accession>
<accession>B4DHG5</accession>
<accession>B4DNM2</accession>
<accession>Q75N06</accession>
<accession>Q75N22</accession>
<accession>Q8N764</accession>
<accession>Q9H3D7</accession>
<accession>Q9UDR0</accession>
<gene>
    <name type="primary">CDK14</name>
    <name type="synonym">KIAA0834</name>
    <name type="synonym">PFTK1</name>
</gene>
<protein>
    <recommendedName>
        <fullName>Cyclin-dependent kinase 14</fullName>
        <ecNumber>2.7.11.22</ecNumber>
    </recommendedName>
    <alternativeName>
        <fullName>Cell division protein kinase 14</fullName>
    </alternativeName>
    <alternativeName>
        <fullName>Serine/threonine-protein kinase PFTAIRE-1</fullName>
        <shortName>hPFTAIRE1</shortName>
    </alternativeName>
</protein>
<sequence length="469" mass="53057">MCDLIEPQPAEKIGKMKKLRRTLSESFSRIALKKDDTTFDEICVTKMSTRNCQGMDSVIKPLDTIPEDKKVRVQRTQSTFDPFEKPANQVKRVHSENNACINFKTSSTGKESPKVRRHSSPSSPTSPKFGKADSYEKLEKLGEGSYATVYKGKSKVNGKLVALKVIRLQEEEGTPFTAIREASLLKGLKHANIVLLHDIIHTKETLTLVFEYVHTDLCQYMDKHPGGLHPDNVKLFLFQLLRGLSYIHQRYILHRDLKPQNLLISDTGELKLADFGLARAKSVPSHTYSNEVVTLWYRPPDVLLGSTEYSTCLDMWGVGCIFVEMIQGVAAFPGMKDIQDQLERIFLVLGTPNEDTWPGVHSLPHFKPERFTLYSSKNLRQAWNKLSYVNHAEDLASKLLQCSPKNRLSAQAALSHEYFSDLPPRLWELTDMSSIFTVPNVRLQPEAGESMRAFGKNNSYGKSLSNSKH</sequence>
<evidence type="ECO:0000255" key="1">
    <source>
        <dbReference type="PROSITE-ProRule" id="PRU00159"/>
    </source>
</evidence>
<evidence type="ECO:0000255" key="2">
    <source>
        <dbReference type="PROSITE-ProRule" id="PRU10027"/>
    </source>
</evidence>
<evidence type="ECO:0000256" key="3">
    <source>
        <dbReference type="SAM" id="MobiDB-lite"/>
    </source>
</evidence>
<evidence type="ECO:0000269" key="4">
    <source>
    </source>
</evidence>
<evidence type="ECO:0000269" key="5">
    <source>
    </source>
</evidence>
<evidence type="ECO:0000269" key="6">
    <source>
    </source>
</evidence>
<evidence type="ECO:0000269" key="7">
    <source>
    </source>
</evidence>
<evidence type="ECO:0000269" key="8">
    <source>
    </source>
</evidence>
<evidence type="ECO:0000269" key="9">
    <source>
    </source>
</evidence>
<evidence type="ECO:0000269" key="10">
    <source>
    </source>
</evidence>
<evidence type="ECO:0000269" key="11">
    <source>
    </source>
</evidence>
<evidence type="ECO:0000269" key="12">
    <source>
    </source>
</evidence>
<evidence type="ECO:0000303" key="13">
    <source>
    </source>
</evidence>
<evidence type="ECO:0000303" key="14">
    <source>
    </source>
</evidence>
<evidence type="ECO:0000305" key="15"/>
<evidence type="ECO:0007744" key="16">
    <source>
    </source>
</evidence>
<evidence type="ECO:0007744" key="17">
    <source>
    </source>
</evidence>
<evidence type="ECO:0007744" key="18">
    <source>
    </source>
</evidence>
<name>CDK14_HUMAN</name>
<comment type="function">
    <text evidence="6 9 10 11">Serine/threonine-protein kinase involved in the control of the eukaryotic cell cycle, whose activity is controlled by an associated cyclin. Acts as a cell-cycle regulator of Wnt signaling pathway during G2/M phase by mediating the phosphorylation of LRP6 at 'Ser-1490', leading to the activation of the Wnt signaling pathway. Acts as a regulator of cell cycle progression and cell proliferation via its interaction with CCDN3. Phosphorylates RB1 in vitro, however the relevance of such result remains to be confirmed in vivo. May also play a role in meiosis, neuron differentiation and may indirectly act as a negative regulator of insulin-responsive glucose transport.</text>
</comment>
<comment type="catalytic activity">
    <reaction>
        <text>L-seryl-[protein] + ATP = O-phospho-L-seryl-[protein] + ADP + H(+)</text>
        <dbReference type="Rhea" id="RHEA:17989"/>
        <dbReference type="Rhea" id="RHEA-COMP:9863"/>
        <dbReference type="Rhea" id="RHEA-COMP:11604"/>
        <dbReference type="ChEBI" id="CHEBI:15378"/>
        <dbReference type="ChEBI" id="CHEBI:29999"/>
        <dbReference type="ChEBI" id="CHEBI:30616"/>
        <dbReference type="ChEBI" id="CHEBI:83421"/>
        <dbReference type="ChEBI" id="CHEBI:456216"/>
        <dbReference type="EC" id="2.7.11.22"/>
    </reaction>
</comment>
<comment type="catalytic activity">
    <reaction>
        <text>L-threonyl-[protein] + ATP = O-phospho-L-threonyl-[protein] + ADP + H(+)</text>
        <dbReference type="Rhea" id="RHEA:46608"/>
        <dbReference type="Rhea" id="RHEA-COMP:11060"/>
        <dbReference type="Rhea" id="RHEA-COMP:11605"/>
        <dbReference type="ChEBI" id="CHEBI:15378"/>
        <dbReference type="ChEBI" id="CHEBI:30013"/>
        <dbReference type="ChEBI" id="CHEBI:30616"/>
        <dbReference type="ChEBI" id="CHEBI:61977"/>
        <dbReference type="ChEBI" id="CHEBI:456216"/>
        <dbReference type="EC" id="2.7.11.22"/>
    </reaction>
</comment>
<comment type="activity regulation">
    <text>Serine/threonine-protein kinase activity is promoted by associated cyclins CCDN3 and CCNY and repressed by CDKN1A.</text>
</comment>
<comment type="subunit">
    <text evidence="5 7 9 10 11 12">Found in a complex with LRP6, CCNY and CAPRIN2 during G2/M stage; CAPRIN2 functions as a scaffold for the complex by binding to CCNY via its N terminus and to CDK14 via its C terminus (PubMed:27821587). Interacts with CCNY; CCNY mediates its recruitment to the plasma membrane and promotes phosphorylation of LRP6 (PubMed:19524571, PubMed:20059949). Interacts with CCDN3 and CDKN1A (PubMed:17517622). Interacts with SEPT8 (PubMed:12098780). Interacts with 14-3-3 proteina YWHAB, YWHAE, YWHAH and YWHAQ (PubMed:16775625).</text>
</comment>
<comment type="interaction">
    <interactant intactId="EBI-1043945">
        <id>O94921</id>
    </interactant>
    <interactant intactId="EBI-375013">
        <id>P30281</id>
        <label>CCND3</label>
    </interactant>
    <organismsDiffer>false</organismsDiffer>
    <experiments>5</experiments>
</comment>
<comment type="interaction">
    <interactant intactId="EBI-1043945">
        <id>O94921</id>
    </interactant>
    <interactant intactId="EBI-1049189">
        <id>Q8ND76</id>
        <label>CCNY</label>
    </interactant>
    <organismsDiffer>false</organismsDiffer>
    <experiments>7</experiments>
</comment>
<comment type="interaction">
    <interactant intactId="EBI-1043945">
        <id>O94921</id>
    </interactant>
    <interactant intactId="EBI-375077">
        <id>P38936</id>
        <label>CDKN1A</label>
    </interactant>
    <organismsDiffer>false</organismsDiffer>
    <experiments>11</experiments>
</comment>
<comment type="interaction">
    <interactant intactId="EBI-1043945">
        <id>O94921</id>
    </interactant>
    <interactant intactId="EBI-352572">
        <id>P08238</id>
        <label>HSP90AB1</label>
    </interactant>
    <organismsDiffer>false</organismsDiffer>
    <experiments>2</experiments>
</comment>
<comment type="interaction">
    <interactant intactId="EBI-1043945">
        <id>O94921</id>
    </interactant>
    <interactant intactId="EBI-359815">
        <id>P31946</id>
        <label>YWHAB</label>
    </interactant>
    <organismsDiffer>false</organismsDiffer>
    <experiments>6</experiments>
</comment>
<comment type="interaction">
    <interactant intactId="EBI-1043945">
        <id>O94921</id>
    </interactant>
    <interactant intactId="EBI-356498">
        <id>P62258</id>
        <label>YWHAE</label>
    </interactant>
    <organismsDiffer>false</organismsDiffer>
    <experiments>4</experiments>
</comment>
<comment type="interaction">
    <interactant intactId="EBI-1043945">
        <id>O94921</id>
    </interactant>
    <interactant intactId="EBI-306940">
        <id>Q04917</id>
        <label>YWHAH</label>
    </interactant>
    <organismsDiffer>false</organismsDiffer>
    <experiments>6</experiments>
</comment>
<comment type="interaction">
    <interactant intactId="EBI-1043945">
        <id>O94921</id>
    </interactant>
    <interactant intactId="EBI-359854">
        <id>P27348</id>
        <label>YWHAQ</label>
    </interactant>
    <organismsDiffer>false</organismsDiffer>
    <experiments>4</experiments>
</comment>
<comment type="subcellular location">
    <subcellularLocation>
        <location>Cell membrane</location>
        <topology>Peripheral membrane protein</topology>
    </subcellularLocation>
    <subcellularLocation>
        <location>Cytoplasm</location>
    </subcellularLocation>
    <subcellularLocation>
        <location>Nucleus</location>
    </subcellularLocation>
    <text>Recruited to the cell membrane by CCNY.</text>
</comment>
<comment type="alternative products">
    <event type="alternative splicing"/>
    <isoform>
        <id>O94921-1</id>
        <name>1</name>
        <sequence type="displayed"/>
    </isoform>
    <isoform>
        <id>O94921-2</id>
        <name>2</name>
        <sequence type="described" ref="VSP_004803"/>
    </isoform>
    <isoform>
        <id>O94921-3</id>
        <name>3</name>
        <sequence type="described" ref="VSP_038762"/>
    </isoform>
</comment>
<comment type="tissue specificity">
    <text evidence="4">Highly expressed in brain, pancreas, kidney, heart, testis and ovary. Also detected at lower levels in other tissues except in spleen and thymus where expression is barely detected.</text>
</comment>
<comment type="similarity">
    <text evidence="15">Belongs to the protein kinase superfamily. CMGC Ser/Thr protein kinase family. CDC2/CDKX subfamily.</text>
</comment>
<comment type="sequence caution" evidence="15">
    <conflict type="erroneous initiation">
        <sequence resource="EMBL-CDS" id="BAA74857"/>
    </conflict>
</comment>
<organism>
    <name type="scientific">Homo sapiens</name>
    <name type="common">Human</name>
    <dbReference type="NCBI Taxonomy" id="9606"/>
    <lineage>
        <taxon>Eukaryota</taxon>
        <taxon>Metazoa</taxon>
        <taxon>Chordata</taxon>
        <taxon>Craniata</taxon>
        <taxon>Vertebrata</taxon>
        <taxon>Euteleostomi</taxon>
        <taxon>Mammalia</taxon>
        <taxon>Eutheria</taxon>
        <taxon>Euarchontoglires</taxon>
        <taxon>Primates</taxon>
        <taxon>Haplorrhini</taxon>
        <taxon>Catarrhini</taxon>
        <taxon>Hominidae</taxon>
        <taxon>Homo</taxon>
    </lineage>
</organism>
<feature type="chain" id="PRO_0000086506" description="Cyclin-dependent kinase 14">
    <location>
        <begin position="1"/>
        <end position="469"/>
    </location>
</feature>
<feature type="domain" description="Protein kinase" evidence="1">
    <location>
        <begin position="135"/>
        <end position="419"/>
    </location>
</feature>
<feature type="region of interest" description="Disordered" evidence="3">
    <location>
        <begin position="103"/>
        <end position="133"/>
    </location>
</feature>
<feature type="region of interest" description="Disordered" evidence="3">
    <location>
        <begin position="449"/>
        <end position="469"/>
    </location>
</feature>
<feature type="compositionally biased region" description="Polar residues" evidence="3">
    <location>
        <begin position="456"/>
        <end position="469"/>
    </location>
</feature>
<feature type="active site" description="Proton acceptor" evidence="1 2">
    <location>
        <position position="256"/>
    </location>
</feature>
<feature type="binding site" evidence="1">
    <location>
        <begin position="141"/>
        <end position="149"/>
    </location>
    <ligand>
        <name>ATP</name>
        <dbReference type="ChEBI" id="CHEBI:30616"/>
    </ligand>
</feature>
<feature type="binding site" evidence="15">
    <location>
        <position position="164"/>
    </location>
    <ligand>
        <name>ATP</name>
        <dbReference type="ChEBI" id="CHEBI:30616"/>
    </ligand>
</feature>
<feature type="modified residue" description="Phosphoserine" evidence="18">
    <location>
        <position position="24"/>
    </location>
</feature>
<feature type="modified residue" description="Phosphoserine" evidence="18">
    <location>
        <position position="78"/>
    </location>
</feature>
<feature type="modified residue" description="Phosphoserine" evidence="16 17">
    <location>
        <position position="95"/>
    </location>
</feature>
<feature type="modified residue" description="Phosphoserine" evidence="18">
    <location>
        <position position="134"/>
    </location>
</feature>
<feature type="splice variant" id="VSP_038762" description="In isoform 3." evidence="13">
    <location>
        <begin position="1"/>
        <end position="46"/>
    </location>
</feature>
<feature type="splice variant" id="VSP_004803" description="In isoform 2." evidence="13 14">
    <original>MCDLIEPQPAEKIGKMKKLRRTLSESFSRIALKKDDTTFDE</original>
    <variation>MHGYFGCNAAAEPGYSAFVGTPQ</variation>
    <location>
        <begin position="1"/>
        <end position="41"/>
    </location>
</feature>
<feature type="sequence variant" id="VAR_046765" description="In an ovarian mucinous carcinoma; somatic mutation; dbSNP:rs773301216." evidence="8">
    <original>M</original>
    <variation>I</variation>
    <location>
        <position position="432"/>
    </location>
</feature>
<feature type="sequence variant" id="VAR_046766" description="In dbSNP:rs35643773." evidence="8">
    <original>S</original>
    <variation>R</variation>
    <location>
        <position position="463"/>
    </location>
</feature>
<feature type="mutagenesis site" description="Abolishes protein kinase activity." evidence="9 10">
    <original>K</original>
    <variation>R</variation>
    <location>
        <position position="164"/>
    </location>
</feature>
<feature type="sequence conflict" description="In Ref. 3; BAG60284." evidence="15" ref="3">
    <original>Q</original>
    <variation>R</variation>
    <location>
        <position position="8"/>
    </location>
</feature>
<feature type="sequence conflict" description="In Ref. 1; AAG43234." evidence="15" ref="1">
    <original>G</original>
    <variation>W</variation>
    <location>
        <position position="158"/>
    </location>
</feature>